<name>MZM1_CANDC</name>
<reference key="1">
    <citation type="journal article" date="2009" name="Genome Res.">
        <title>Comparative genomics of the fungal pathogens Candida dubliniensis and Candida albicans.</title>
        <authorList>
            <person name="Jackson A.P."/>
            <person name="Gamble J.A."/>
            <person name="Yeomans T."/>
            <person name="Moran G.P."/>
            <person name="Saunders D."/>
            <person name="Harris D."/>
            <person name="Aslett M."/>
            <person name="Barrell J.F."/>
            <person name="Butler G."/>
            <person name="Citiulo F."/>
            <person name="Coleman D.C."/>
            <person name="de Groot P.W.J."/>
            <person name="Goodwin T.J."/>
            <person name="Quail M.A."/>
            <person name="McQuillan J."/>
            <person name="Munro C.A."/>
            <person name="Pain A."/>
            <person name="Poulter R.T."/>
            <person name="Rajandream M.A."/>
            <person name="Renauld H."/>
            <person name="Spiering M.J."/>
            <person name="Tivey A."/>
            <person name="Gow N.A.R."/>
            <person name="Barrell B."/>
            <person name="Sullivan D.J."/>
            <person name="Berriman M."/>
        </authorList>
    </citation>
    <scope>NUCLEOTIDE SEQUENCE [LARGE SCALE GENOMIC DNA]</scope>
    <source>
        <strain>CD36 / ATCC MYA-646 / CBS 7987 / NCPF 3949 / NRRL Y-17841</strain>
    </source>
</reference>
<gene>
    <name type="primary">MZM1</name>
    <name type="ORF">CD36_80310</name>
</gene>
<feature type="transit peptide" description="Mitochondrion" evidence="2">
    <location>
        <begin position="1"/>
        <end position="10"/>
    </location>
</feature>
<feature type="chain" id="PRO_0000405489" description="Mitochondrial zinc maintenance protein 1, mitochondrial">
    <location>
        <begin position="11"/>
        <end position="117"/>
    </location>
</feature>
<dbReference type="EMBL" id="FM992690">
    <property type="protein sequence ID" value="CAX42561.1"/>
    <property type="molecule type" value="Genomic_DNA"/>
</dbReference>
<dbReference type="RefSeq" id="XP_002418979.1">
    <property type="nucleotide sequence ID" value="XM_002418934.1"/>
</dbReference>
<dbReference type="SMR" id="B9WD12"/>
<dbReference type="GeneID" id="8046761"/>
<dbReference type="KEGG" id="cdu:CD36_80310"/>
<dbReference type="CGD" id="CAL0000165987">
    <property type="gene designation" value="Cd36_80310"/>
</dbReference>
<dbReference type="VEuPathDB" id="FungiDB:CD36_80310"/>
<dbReference type="eggNOG" id="ENOG502S6EF">
    <property type="taxonomic scope" value="Eukaryota"/>
</dbReference>
<dbReference type="HOGENOM" id="CLU_147114_2_2_1"/>
<dbReference type="OrthoDB" id="529194at2759"/>
<dbReference type="Proteomes" id="UP000002605">
    <property type="component" value="Chromosome 3"/>
</dbReference>
<dbReference type="GO" id="GO:0005759">
    <property type="term" value="C:mitochondrial matrix"/>
    <property type="evidence" value="ECO:0007669"/>
    <property type="project" value="UniProtKB-SubCell"/>
</dbReference>
<dbReference type="GO" id="GO:0044183">
    <property type="term" value="F:protein folding chaperone"/>
    <property type="evidence" value="ECO:0007669"/>
    <property type="project" value="TreeGrafter"/>
</dbReference>
<dbReference type="GO" id="GO:0034551">
    <property type="term" value="P:mitochondrial respiratory chain complex III assembly"/>
    <property type="evidence" value="ECO:0007669"/>
    <property type="project" value="InterPro"/>
</dbReference>
<dbReference type="CDD" id="cd20267">
    <property type="entry name" value="Complex1_LYR_LYRM7"/>
    <property type="match status" value="1"/>
</dbReference>
<dbReference type="InterPro" id="IPR045298">
    <property type="entry name" value="Complex1_LYR_LYRM7"/>
</dbReference>
<dbReference type="InterPro" id="IPR050435">
    <property type="entry name" value="MZM1/LYRM7"/>
</dbReference>
<dbReference type="PANTHER" id="PTHR46749">
    <property type="entry name" value="COMPLEX III ASSEMBLY FACTOR LYRM7"/>
    <property type="match status" value="1"/>
</dbReference>
<dbReference type="PANTHER" id="PTHR46749:SF1">
    <property type="entry name" value="COMPLEX III ASSEMBLY FACTOR LYRM7"/>
    <property type="match status" value="1"/>
</dbReference>
<protein>
    <recommendedName>
        <fullName>Mitochondrial zinc maintenance protein 1, mitochondrial</fullName>
    </recommendedName>
</protein>
<accession>B9WD12</accession>
<keyword id="KW-0143">Chaperone</keyword>
<keyword id="KW-0496">Mitochondrion</keyword>
<keyword id="KW-0809">Transit peptide</keyword>
<proteinExistence type="inferred from homology"/>
<comment type="function">
    <text evidence="1">Assembly factor required for Rieske Fe-S protein RIP1 incorporation into the cytochrome b-c1 (CIII) complex. Functions as a chaperone, binding to this subunit within the mitochondrial matrix and stabilizing it prior to its translocation and insertion into the late CIII dimeric intermediate within the mitochondrial inner membrane. Modulates the mitochondrial matrix zinc pool (By similarity).</text>
</comment>
<comment type="subunit">
    <text evidence="1">Interacts with RIP1.</text>
</comment>
<comment type="subcellular location">
    <subcellularLocation>
        <location evidence="1">Mitochondrion matrix</location>
    </subcellularLocation>
</comment>
<comment type="similarity">
    <text evidence="3">Belongs to the complex I LYR family. MZM1 subfamily.</text>
</comment>
<sequence>MSSTLSAYRNALRATRIAFRQDLPILQAARMQLKQGIRDNSNLQTQPEIEEAVQKLNDVAKFLIQNIVQGEKQQDGKYFLNFHEKTELGDNETIKQGRKEMGSLAGKKGNSIKSCKD</sequence>
<organism>
    <name type="scientific">Candida dubliniensis (strain CD36 / ATCC MYA-646 / CBS 7987 / NCPF 3949 / NRRL Y-17841)</name>
    <name type="common">Yeast</name>
    <dbReference type="NCBI Taxonomy" id="573826"/>
    <lineage>
        <taxon>Eukaryota</taxon>
        <taxon>Fungi</taxon>
        <taxon>Dikarya</taxon>
        <taxon>Ascomycota</taxon>
        <taxon>Saccharomycotina</taxon>
        <taxon>Pichiomycetes</taxon>
        <taxon>Debaryomycetaceae</taxon>
        <taxon>Candida/Lodderomyces clade</taxon>
        <taxon>Candida</taxon>
    </lineage>
</organism>
<evidence type="ECO:0000250" key="1"/>
<evidence type="ECO:0000255" key="2"/>
<evidence type="ECO:0000305" key="3"/>